<proteinExistence type="inferred from homology"/>
<reference key="1">
    <citation type="submission" date="2009-04" db="EMBL/GenBank/DDBJ databases">
        <title>Genome sequence of Bacillus anthracis A0248.</title>
        <authorList>
            <person name="Dodson R.J."/>
            <person name="Munk A.C."/>
            <person name="Bruce D."/>
            <person name="Detter C."/>
            <person name="Tapia R."/>
            <person name="Sutton G."/>
            <person name="Sims D."/>
            <person name="Brettin T."/>
        </authorList>
    </citation>
    <scope>NUCLEOTIDE SEQUENCE [LARGE SCALE GENOMIC DNA]</scope>
    <source>
        <strain>A0248</strain>
    </source>
</reference>
<gene>
    <name evidence="1" type="primary">cinA</name>
    <name type="ordered locus">BAA_3942</name>
</gene>
<name>CINA_BACAA</name>
<accession>C3P5I7</accession>
<feature type="chain" id="PRO_1000124974" description="Putative competence-damage inducible protein">
    <location>
        <begin position="1"/>
        <end position="412"/>
    </location>
</feature>
<evidence type="ECO:0000255" key="1">
    <source>
        <dbReference type="HAMAP-Rule" id="MF_00226"/>
    </source>
</evidence>
<organism>
    <name type="scientific">Bacillus anthracis (strain A0248)</name>
    <dbReference type="NCBI Taxonomy" id="592021"/>
    <lineage>
        <taxon>Bacteria</taxon>
        <taxon>Bacillati</taxon>
        <taxon>Bacillota</taxon>
        <taxon>Bacilli</taxon>
        <taxon>Bacillales</taxon>
        <taxon>Bacillaceae</taxon>
        <taxon>Bacillus</taxon>
        <taxon>Bacillus cereus group</taxon>
    </lineage>
</organism>
<dbReference type="EMBL" id="CP001598">
    <property type="protein sequence ID" value="ACQ50266.1"/>
    <property type="molecule type" value="Genomic_DNA"/>
</dbReference>
<dbReference type="RefSeq" id="WP_000990715.1">
    <property type="nucleotide sequence ID" value="NC_012659.1"/>
</dbReference>
<dbReference type="SMR" id="C3P5I7"/>
<dbReference type="GeneID" id="45023610"/>
<dbReference type="KEGG" id="bai:BAA_3942"/>
<dbReference type="HOGENOM" id="CLU_030805_9_3_9"/>
<dbReference type="CDD" id="cd00885">
    <property type="entry name" value="cinA"/>
    <property type="match status" value="1"/>
</dbReference>
<dbReference type="Gene3D" id="3.30.70.2860">
    <property type="match status" value="1"/>
</dbReference>
<dbReference type="Gene3D" id="3.90.950.20">
    <property type="entry name" value="CinA-like"/>
    <property type="match status" value="1"/>
</dbReference>
<dbReference type="Gene3D" id="3.40.980.10">
    <property type="entry name" value="MoaB/Mog-like domain"/>
    <property type="match status" value="1"/>
</dbReference>
<dbReference type="HAMAP" id="MF_00226_B">
    <property type="entry name" value="CinA_B"/>
    <property type="match status" value="1"/>
</dbReference>
<dbReference type="InterPro" id="IPR050101">
    <property type="entry name" value="CinA"/>
</dbReference>
<dbReference type="InterPro" id="IPR036653">
    <property type="entry name" value="CinA-like_C"/>
</dbReference>
<dbReference type="InterPro" id="IPR008136">
    <property type="entry name" value="CinA_C"/>
</dbReference>
<dbReference type="InterPro" id="IPR041424">
    <property type="entry name" value="CinA_KH"/>
</dbReference>
<dbReference type="InterPro" id="IPR008135">
    <property type="entry name" value="Competence-induced_CinA"/>
</dbReference>
<dbReference type="InterPro" id="IPR036425">
    <property type="entry name" value="MoaB/Mog-like_dom_sf"/>
</dbReference>
<dbReference type="InterPro" id="IPR001453">
    <property type="entry name" value="MoaB/Mog_dom"/>
</dbReference>
<dbReference type="NCBIfam" id="TIGR00200">
    <property type="entry name" value="cinA_nterm"/>
    <property type="match status" value="1"/>
</dbReference>
<dbReference type="NCBIfam" id="TIGR00177">
    <property type="entry name" value="molyb_syn"/>
    <property type="match status" value="1"/>
</dbReference>
<dbReference type="NCBIfam" id="TIGR00199">
    <property type="entry name" value="PncC_domain"/>
    <property type="match status" value="1"/>
</dbReference>
<dbReference type="NCBIfam" id="NF001813">
    <property type="entry name" value="PRK00549.1"/>
    <property type="match status" value="1"/>
</dbReference>
<dbReference type="PANTHER" id="PTHR13939">
    <property type="entry name" value="NICOTINAMIDE-NUCLEOTIDE AMIDOHYDROLASE PNCC"/>
    <property type="match status" value="1"/>
</dbReference>
<dbReference type="PANTHER" id="PTHR13939:SF0">
    <property type="entry name" value="NMN AMIDOHYDROLASE-LIKE PROTEIN YFAY"/>
    <property type="match status" value="1"/>
</dbReference>
<dbReference type="Pfam" id="PF02464">
    <property type="entry name" value="CinA"/>
    <property type="match status" value="1"/>
</dbReference>
<dbReference type="Pfam" id="PF18146">
    <property type="entry name" value="CinA_KH"/>
    <property type="match status" value="1"/>
</dbReference>
<dbReference type="Pfam" id="PF00994">
    <property type="entry name" value="MoCF_biosynth"/>
    <property type="match status" value="1"/>
</dbReference>
<dbReference type="PIRSF" id="PIRSF006728">
    <property type="entry name" value="CinA"/>
    <property type="match status" value="1"/>
</dbReference>
<dbReference type="SMART" id="SM00852">
    <property type="entry name" value="MoCF_biosynth"/>
    <property type="match status" value="1"/>
</dbReference>
<dbReference type="SUPFAM" id="SSF142433">
    <property type="entry name" value="CinA-like"/>
    <property type="match status" value="1"/>
</dbReference>
<dbReference type="SUPFAM" id="SSF53218">
    <property type="entry name" value="Molybdenum cofactor biosynthesis proteins"/>
    <property type="match status" value="1"/>
</dbReference>
<comment type="similarity">
    <text evidence="1">Belongs to the CinA family.</text>
</comment>
<sequence>MNAEIIAVGTELLLGQIANTNAQFLSEKLASIGINVYYHTVVGDNNKRLQQAIEVAEERADMLIFTGGLGPTKDDLTKETIASSLAEELVYDEKALASISDYFKRTGREFTENNKKQALVLDGATVFANDHGMAPGMGLNKNGKVYILLPGPPKEMKPMYVSYVEPFLRNFTTGENIYSRVLRFFGIGESQLEVKVQDLIDGQTNPTIAPLANDGEVTLRLTAKHQNVDEAEKLIQHVEDLILERVGGFFYGYDQEFLHDKAIVLLKKKGLTLACAESLTGGLFGNQVTESAGVSSVFKGGVICYHNDVKQHVLHVPEEVLFTDGAVSKECARYLAENVKELLEADIGISFTGVAGPDASEHKEPGTVFVGLAIKDEPTVVFPLNLSGSRQQIRERSAKYGFYHLYKKLEEI</sequence>
<protein>
    <recommendedName>
        <fullName evidence="1">Putative competence-damage inducible protein</fullName>
    </recommendedName>
</protein>